<accession>Q9P7S5</accession>
<organism>
    <name type="scientific">Schizosaccharomyces pombe (strain 972 / ATCC 24843)</name>
    <name type="common">Fission yeast</name>
    <dbReference type="NCBI Taxonomy" id="284812"/>
    <lineage>
        <taxon>Eukaryota</taxon>
        <taxon>Fungi</taxon>
        <taxon>Dikarya</taxon>
        <taxon>Ascomycota</taxon>
        <taxon>Taphrinomycotina</taxon>
        <taxon>Schizosaccharomycetes</taxon>
        <taxon>Schizosaccharomycetales</taxon>
        <taxon>Schizosaccharomycetaceae</taxon>
        <taxon>Schizosaccharomyces</taxon>
    </lineage>
</organism>
<comment type="catalytic activity">
    <reaction>
        <text>Thiol-dependent hydrolysis of ester, thioester, amide, peptide and isopeptide bonds formed by the C-terminal Gly of ubiquitin (a 76-residue protein attached to proteins as an intracellular targeting signal).</text>
        <dbReference type="EC" id="3.4.19.12"/>
    </reaction>
</comment>
<comment type="similarity">
    <text evidence="6">Belongs to the peptidase C19 family.</text>
</comment>
<dbReference type="EC" id="3.4.19.12"/>
<dbReference type="EMBL" id="CU329670">
    <property type="protein sequence ID" value="CAB72233.1"/>
    <property type="molecule type" value="Genomic_DNA"/>
</dbReference>
<dbReference type="PIR" id="T50182">
    <property type="entry name" value="T50182"/>
</dbReference>
<dbReference type="RefSeq" id="NP_593108.1">
    <property type="nucleotide sequence ID" value="NM_001018505.2"/>
</dbReference>
<dbReference type="BioGRID" id="278336">
    <property type="interactions" value="16"/>
</dbReference>
<dbReference type="FunCoup" id="Q9P7S5">
    <property type="interactions" value="49"/>
</dbReference>
<dbReference type="STRING" id="284812.Q9P7S5"/>
<dbReference type="iPTMnet" id="Q9P7S5"/>
<dbReference type="PaxDb" id="4896-SPAC23G3.08c.1"/>
<dbReference type="EnsemblFungi" id="SPAC23G3.08c.1">
    <property type="protein sequence ID" value="SPAC23G3.08c.1:pep"/>
    <property type="gene ID" value="SPAC23G3.08c"/>
</dbReference>
<dbReference type="GeneID" id="2541845"/>
<dbReference type="KEGG" id="spo:2541845"/>
<dbReference type="PomBase" id="SPAC23G3.08c">
    <property type="gene designation" value="ubp7"/>
</dbReference>
<dbReference type="VEuPathDB" id="FungiDB:SPAC23G3.08c"/>
<dbReference type="eggNOG" id="KOG1873">
    <property type="taxonomic scope" value="Eukaryota"/>
</dbReference>
<dbReference type="HOGENOM" id="CLU_363755_0_0_1"/>
<dbReference type="InParanoid" id="Q9P7S5"/>
<dbReference type="OMA" id="GHLSKTY"/>
<dbReference type="PhylomeDB" id="Q9P7S5"/>
<dbReference type="Reactome" id="R-SPO-110314">
    <property type="pathway name" value="Recognition of DNA damage by PCNA-containing replication complex"/>
</dbReference>
<dbReference type="Reactome" id="R-SPO-5689880">
    <property type="pathway name" value="Ub-specific processing proteases"/>
</dbReference>
<dbReference type="Reactome" id="R-SPO-9664873">
    <property type="pathway name" value="Pexophagy"/>
</dbReference>
<dbReference type="PRO" id="PR:Q9P7S5"/>
<dbReference type="Proteomes" id="UP000002485">
    <property type="component" value="Chromosome I"/>
</dbReference>
<dbReference type="GO" id="GO:0005737">
    <property type="term" value="C:cytoplasm"/>
    <property type="evidence" value="ECO:0007005"/>
    <property type="project" value="PomBase"/>
</dbReference>
<dbReference type="GO" id="GO:0005829">
    <property type="term" value="C:cytosol"/>
    <property type="evidence" value="ECO:0007005"/>
    <property type="project" value="PomBase"/>
</dbReference>
<dbReference type="GO" id="GO:0005634">
    <property type="term" value="C:nucleus"/>
    <property type="evidence" value="ECO:0000318"/>
    <property type="project" value="GO_Central"/>
</dbReference>
<dbReference type="GO" id="GO:0004843">
    <property type="term" value="F:cysteine-type deubiquitinase activity"/>
    <property type="evidence" value="ECO:0000318"/>
    <property type="project" value="GO_Central"/>
</dbReference>
<dbReference type="GO" id="GO:0140492">
    <property type="term" value="F:metal-dependent deubiquitinase activity"/>
    <property type="evidence" value="ECO:0007005"/>
    <property type="project" value="PomBase"/>
</dbReference>
<dbReference type="GO" id="GO:0008270">
    <property type="term" value="F:zinc ion binding"/>
    <property type="evidence" value="ECO:0007669"/>
    <property type="project" value="UniProtKB-KW"/>
</dbReference>
<dbReference type="GO" id="GO:0016579">
    <property type="term" value="P:protein deubiquitination"/>
    <property type="evidence" value="ECO:0007669"/>
    <property type="project" value="InterPro"/>
</dbReference>
<dbReference type="GO" id="GO:0006508">
    <property type="term" value="P:proteolysis"/>
    <property type="evidence" value="ECO:0007669"/>
    <property type="project" value="UniProtKB-KW"/>
</dbReference>
<dbReference type="GO" id="GO:0031647">
    <property type="term" value="P:regulation of protein stability"/>
    <property type="evidence" value="ECO:0000318"/>
    <property type="project" value="GO_Central"/>
</dbReference>
<dbReference type="CDD" id="cd02667">
    <property type="entry name" value="Peptidase_C19K"/>
    <property type="match status" value="1"/>
</dbReference>
<dbReference type="Gene3D" id="3.90.70.10">
    <property type="entry name" value="Cysteine proteinases"/>
    <property type="match status" value="2"/>
</dbReference>
<dbReference type="Gene3D" id="3.30.40.10">
    <property type="entry name" value="Zinc/RING finger domain, C3HC4 (zinc finger)"/>
    <property type="match status" value="1"/>
</dbReference>
<dbReference type="InterPro" id="IPR038765">
    <property type="entry name" value="Papain-like_cys_pep_sf"/>
</dbReference>
<dbReference type="InterPro" id="IPR050164">
    <property type="entry name" value="Peptidase_C19"/>
</dbReference>
<dbReference type="InterPro" id="IPR001394">
    <property type="entry name" value="Peptidase_C19_UCH"/>
</dbReference>
<dbReference type="InterPro" id="IPR018200">
    <property type="entry name" value="USP_CS"/>
</dbReference>
<dbReference type="InterPro" id="IPR028889">
    <property type="entry name" value="USP_dom"/>
</dbReference>
<dbReference type="InterPro" id="IPR013083">
    <property type="entry name" value="Znf_RING/FYVE/PHD"/>
</dbReference>
<dbReference type="InterPro" id="IPR001607">
    <property type="entry name" value="Znf_UBP"/>
</dbReference>
<dbReference type="PANTHER" id="PTHR24006">
    <property type="entry name" value="UBIQUITIN CARBOXYL-TERMINAL HYDROLASE"/>
    <property type="match status" value="1"/>
</dbReference>
<dbReference type="PANTHER" id="PTHR24006:SF888">
    <property type="entry name" value="UBIQUITIN CARBOXYL-TERMINAL HYDROLASE 30"/>
    <property type="match status" value="1"/>
</dbReference>
<dbReference type="Pfam" id="PF00443">
    <property type="entry name" value="UCH"/>
    <property type="match status" value="1"/>
</dbReference>
<dbReference type="Pfam" id="PF02148">
    <property type="entry name" value="zf-UBP"/>
    <property type="match status" value="1"/>
</dbReference>
<dbReference type="SUPFAM" id="SSF54001">
    <property type="entry name" value="Cysteine proteinases"/>
    <property type="match status" value="1"/>
</dbReference>
<dbReference type="SUPFAM" id="SSF57850">
    <property type="entry name" value="RING/U-box"/>
    <property type="match status" value="1"/>
</dbReference>
<dbReference type="PROSITE" id="PS00972">
    <property type="entry name" value="USP_1"/>
    <property type="match status" value="1"/>
</dbReference>
<dbReference type="PROSITE" id="PS00973">
    <property type="entry name" value="USP_2"/>
    <property type="match status" value="1"/>
</dbReference>
<dbReference type="PROSITE" id="PS50235">
    <property type="entry name" value="USP_3"/>
    <property type="match status" value="1"/>
</dbReference>
<dbReference type="PROSITE" id="PS50271">
    <property type="entry name" value="ZF_UBP"/>
    <property type="match status" value="1"/>
</dbReference>
<protein>
    <recommendedName>
        <fullName>Probable ubiquitin carboxyl-terminal hydrolase 7</fullName>
        <ecNumber>3.4.19.12</ecNumber>
    </recommendedName>
    <alternativeName>
        <fullName>Deubiquitinating enzyme 7</fullName>
    </alternativeName>
    <alternativeName>
        <fullName>Ubiquitin thioesterase 7</fullName>
    </alternativeName>
    <alternativeName>
        <fullName>Ubiquitin-specific-processing protease 7</fullName>
    </alternativeName>
</protein>
<reference key="1">
    <citation type="journal article" date="2002" name="Nature">
        <title>The genome sequence of Schizosaccharomyces pombe.</title>
        <authorList>
            <person name="Wood V."/>
            <person name="Gwilliam R."/>
            <person name="Rajandream M.A."/>
            <person name="Lyne M.H."/>
            <person name="Lyne R."/>
            <person name="Stewart A."/>
            <person name="Sgouros J.G."/>
            <person name="Peat N."/>
            <person name="Hayles J."/>
            <person name="Baker S.G."/>
            <person name="Basham D."/>
            <person name="Bowman S."/>
            <person name="Brooks K."/>
            <person name="Brown D."/>
            <person name="Brown S."/>
            <person name="Chillingworth T."/>
            <person name="Churcher C.M."/>
            <person name="Collins M."/>
            <person name="Connor R."/>
            <person name="Cronin A."/>
            <person name="Davis P."/>
            <person name="Feltwell T."/>
            <person name="Fraser A."/>
            <person name="Gentles S."/>
            <person name="Goble A."/>
            <person name="Hamlin N."/>
            <person name="Harris D.E."/>
            <person name="Hidalgo J."/>
            <person name="Hodgson G."/>
            <person name="Holroyd S."/>
            <person name="Hornsby T."/>
            <person name="Howarth S."/>
            <person name="Huckle E.J."/>
            <person name="Hunt S."/>
            <person name="Jagels K."/>
            <person name="James K.D."/>
            <person name="Jones L."/>
            <person name="Jones M."/>
            <person name="Leather S."/>
            <person name="McDonald S."/>
            <person name="McLean J."/>
            <person name="Mooney P."/>
            <person name="Moule S."/>
            <person name="Mungall K.L."/>
            <person name="Murphy L.D."/>
            <person name="Niblett D."/>
            <person name="Odell C."/>
            <person name="Oliver K."/>
            <person name="O'Neil S."/>
            <person name="Pearson D."/>
            <person name="Quail M.A."/>
            <person name="Rabbinowitsch E."/>
            <person name="Rutherford K.M."/>
            <person name="Rutter S."/>
            <person name="Saunders D."/>
            <person name="Seeger K."/>
            <person name="Sharp S."/>
            <person name="Skelton J."/>
            <person name="Simmonds M.N."/>
            <person name="Squares R."/>
            <person name="Squares S."/>
            <person name="Stevens K."/>
            <person name="Taylor K."/>
            <person name="Taylor R.G."/>
            <person name="Tivey A."/>
            <person name="Walsh S.V."/>
            <person name="Warren T."/>
            <person name="Whitehead S."/>
            <person name="Woodward J.R."/>
            <person name="Volckaert G."/>
            <person name="Aert R."/>
            <person name="Robben J."/>
            <person name="Grymonprez B."/>
            <person name="Weltjens I."/>
            <person name="Vanstreels E."/>
            <person name="Rieger M."/>
            <person name="Schaefer M."/>
            <person name="Mueller-Auer S."/>
            <person name="Gabel C."/>
            <person name="Fuchs M."/>
            <person name="Duesterhoeft A."/>
            <person name="Fritzc C."/>
            <person name="Holzer E."/>
            <person name="Moestl D."/>
            <person name="Hilbert H."/>
            <person name="Borzym K."/>
            <person name="Langer I."/>
            <person name="Beck A."/>
            <person name="Lehrach H."/>
            <person name="Reinhardt R."/>
            <person name="Pohl T.M."/>
            <person name="Eger P."/>
            <person name="Zimmermann W."/>
            <person name="Wedler H."/>
            <person name="Wambutt R."/>
            <person name="Purnelle B."/>
            <person name="Goffeau A."/>
            <person name="Cadieu E."/>
            <person name="Dreano S."/>
            <person name="Gloux S."/>
            <person name="Lelaure V."/>
            <person name="Mottier S."/>
            <person name="Galibert F."/>
            <person name="Aves S.J."/>
            <person name="Xiang Z."/>
            <person name="Hunt C."/>
            <person name="Moore K."/>
            <person name="Hurst S.M."/>
            <person name="Lucas M."/>
            <person name="Rochet M."/>
            <person name="Gaillardin C."/>
            <person name="Tallada V.A."/>
            <person name="Garzon A."/>
            <person name="Thode G."/>
            <person name="Daga R.R."/>
            <person name="Cruzado L."/>
            <person name="Jimenez J."/>
            <person name="Sanchez M."/>
            <person name="del Rey F."/>
            <person name="Benito J."/>
            <person name="Dominguez A."/>
            <person name="Revuelta J.L."/>
            <person name="Moreno S."/>
            <person name="Armstrong J."/>
            <person name="Forsburg S.L."/>
            <person name="Cerutti L."/>
            <person name="Lowe T."/>
            <person name="McCombie W.R."/>
            <person name="Paulsen I."/>
            <person name="Potashkin J."/>
            <person name="Shpakovski G.V."/>
            <person name="Ussery D."/>
            <person name="Barrell B.G."/>
            <person name="Nurse P."/>
        </authorList>
    </citation>
    <scope>NUCLEOTIDE SEQUENCE [LARGE SCALE GENOMIC DNA]</scope>
    <source>
        <strain>972 / ATCC 24843</strain>
    </source>
</reference>
<reference key="2">
    <citation type="journal article" date="2008" name="J. Proteome Res.">
        <title>Phosphoproteome analysis of fission yeast.</title>
        <authorList>
            <person name="Wilson-Grady J.T."/>
            <person name="Villen J."/>
            <person name="Gygi S.P."/>
        </authorList>
    </citation>
    <scope>PHOSPHORYLATION [LARGE SCALE ANALYSIS] AT SER-333; SER-337; SER-486; SER-493 AND SER-645</scope>
    <scope>IDENTIFICATION BY MASS SPECTROMETRY</scope>
</reference>
<name>UBP7_SCHPO</name>
<evidence type="ECO:0000255" key="1">
    <source>
        <dbReference type="PROSITE-ProRule" id="PRU00502"/>
    </source>
</evidence>
<evidence type="ECO:0000255" key="2">
    <source>
        <dbReference type="PROSITE-ProRule" id="PRU10092"/>
    </source>
</evidence>
<evidence type="ECO:0000255" key="3">
    <source>
        <dbReference type="PROSITE-ProRule" id="PRU10093"/>
    </source>
</evidence>
<evidence type="ECO:0000256" key="4">
    <source>
        <dbReference type="SAM" id="MobiDB-lite"/>
    </source>
</evidence>
<evidence type="ECO:0000269" key="5">
    <source>
    </source>
</evidence>
<evidence type="ECO:0000305" key="6"/>
<keyword id="KW-0378">Hydrolase</keyword>
<keyword id="KW-0479">Metal-binding</keyword>
<keyword id="KW-0597">Phosphoprotein</keyword>
<keyword id="KW-0645">Protease</keyword>
<keyword id="KW-1185">Reference proteome</keyword>
<keyword id="KW-0788">Thiol protease</keyword>
<keyword id="KW-0833">Ubl conjugation pathway</keyword>
<keyword id="KW-0862">Zinc</keyword>
<keyword id="KW-0863">Zinc-finger</keyword>
<feature type="chain" id="PRO_0000080608" description="Probable ubiquitin carboxyl-terminal hydrolase 7">
    <location>
        <begin position="1"/>
        <end position="875"/>
    </location>
</feature>
<feature type="domain" description="USP">
    <location>
        <begin position="208"/>
        <end position="875"/>
    </location>
</feature>
<feature type="zinc finger region" description="UBP-type" evidence="1">
    <location>
        <begin position="54"/>
        <end position="167"/>
    </location>
</feature>
<feature type="region of interest" description="Disordered" evidence="4">
    <location>
        <begin position="396"/>
        <end position="486"/>
    </location>
</feature>
<feature type="region of interest" description="Disordered" evidence="4">
    <location>
        <begin position="575"/>
        <end position="628"/>
    </location>
</feature>
<feature type="compositionally biased region" description="Low complexity" evidence="4">
    <location>
        <begin position="401"/>
        <end position="438"/>
    </location>
</feature>
<feature type="compositionally biased region" description="Basic and acidic residues" evidence="4">
    <location>
        <begin position="473"/>
        <end position="484"/>
    </location>
</feature>
<feature type="compositionally biased region" description="Basic residues" evidence="4">
    <location>
        <begin position="575"/>
        <end position="586"/>
    </location>
</feature>
<feature type="compositionally biased region" description="Polar residues" evidence="4">
    <location>
        <begin position="600"/>
        <end position="611"/>
    </location>
</feature>
<feature type="active site" description="Nucleophile" evidence="2 3">
    <location>
        <position position="217"/>
    </location>
</feature>
<feature type="active site" description="Proton acceptor" evidence="2 3">
    <location>
        <position position="812"/>
    </location>
</feature>
<feature type="binding site" evidence="1">
    <location>
        <position position="56"/>
    </location>
    <ligand>
        <name>Zn(2+)</name>
        <dbReference type="ChEBI" id="CHEBI:29105"/>
        <label>1</label>
    </ligand>
</feature>
<feature type="binding site" evidence="1">
    <location>
        <position position="58"/>
    </location>
    <ligand>
        <name>Zn(2+)</name>
        <dbReference type="ChEBI" id="CHEBI:29105"/>
        <label>1</label>
    </ligand>
</feature>
<feature type="binding site" evidence="1">
    <location>
        <position position="83"/>
    </location>
    <ligand>
        <name>Zn(2+)</name>
        <dbReference type="ChEBI" id="CHEBI:29105"/>
        <label>2</label>
    </ligand>
</feature>
<feature type="binding site" evidence="1">
    <location>
        <position position="86"/>
    </location>
    <ligand>
        <name>Zn(2+)</name>
        <dbReference type="ChEBI" id="CHEBI:29105"/>
        <label>2</label>
    </ligand>
</feature>
<feature type="binding site" evidence="1">
    <location>
        <position position="101"/>
    </location>
    <ligand>
        <name>Zn(2+)</name>
        <dbReference type="ChEBI" id="CHEBI:29105"/>
        <label>3</label>
    </ligand>
</feature>
<feature type="binding site" evidence="1">
    <location>
        <position position="104"/>
    </location>
    <ligand>
        <name>Zn(2+)</name>
        <dbReference type="ChEBI" id="CHEBI:29105"/>
        <label>3</label>
    </ligand>
</feature>
<feature type="binding site" evidence="1">
    <location>
        <position position="109"/>
    </location>
    <ligand>
        <name>Zn(2+)</name>
        <dbReference type="ChEBI" id="CHEBI:29105"/>
        <label>2</label>
    </ligand>
</feature>
<feature type="binding site" evidence="1">
    <location>
        <position position="116"/>
    </location>
    <ligand>
        <name>Zn(2+)</name>
        <dbReference type="ChEBI" id="CHEBI:29105"/>
        <label>2</label>
    </ligand>
</feature>
<feature type="binding site" evidence="1">
    <location>
        <position position="120"/>
    </location>
    <ligand>
        <name>Zn(2+)</name>
        <dbReference type="ChEBI" id="CHEBI:29105"/>
        <label>3</label>
    </ligand>
</feature>
<feature type="binding site" evidence="1">
    <location>
        <position position="127"/>
    </location>
    <ligand>
        <name>Zn(2+)</name>
        <dbReference type="ChEBI" id="CHEBI:29105"/>
        <label>3</label>
    </ligand>
</feature>
<feature type="binding site" evidence="1">
    <location>
        <position position="140"/>
    </location>
    <ligand>
        <name>Zn(2+)</name>
        <dbReference type="ChEBI" id="CHEBI:29105"/>
        <label>1</label>
    </ligand>
</feature>
<feature type="binding site" evidence="1">
    <location>
        <position position="143"/>
    </location>
    <ligand>
        <name>Zn(2+)</name>
        <dbReference type="ChEBI" id="CHEBI:29105"/>
        <label>1</label>
    </ligand>
</feature>
<feature type="modified residue" description="Phosphoserine" evidence="5">
    <location>
        <position position="333"/>
    </location>
</feature>
<feature type="modified residue" description="Phosphoserine" evidence="5">
    <location>
        <position position="337"/>
    </location>
</feature>
<feature type="modified residue" description="Phosphoserine" evidence="5">
    <location>
        <position position="486"/>
    </location>
</feature>
<feature type="modified residue" description="Phosphoserine" evidence="5">
    <location>
        <position position="493"/>
    </location>
</feature>
<feature type="modified residue" description="Phosphoserine" evidence="5">
    <location>
        <position position="645"/>
    </location>
</feature>
<gene>
    <name type="primary">ubp7</name>
    <name type="ORF">SPAC23G3.08c</name>
</gene>
<sequence>MPHSNTLIVPSTNPFDDPSSIKNGLNNLTSSELVNQMKKESLAASVKTPSTPPKECSHLKKGVKLSHLKGNARALRDPSKHLCFICTTEKIKREDYELTLCANCGYLFCCNHESDHSRKHFEKNKKHCVFVNIITLKCHCYSCDADIVIFDKKNLVVRDVQQFICSNLVSSLTKAPNVLKSNSSHFKKEKKSKHSSGKSSKKYKVISPGLKNLGATCFFNSTLQVLCACEALHDVISPFQYSHSSVIVRKLTKSPESSLLSAFIKFLETFYKSDGTISVYRPTTFFGEFRRLHPQFSESVQQDAHELLRLLLDDLISEEFRVLRFNLNSVSRSLQLSPCLTDDEQLSKSLTSFKQVNVTDASLSPNSHNTSDNEQNNEDYVSVSSLVGSETEDITYSKELSQSSDSSQHQHDSFLPANSSPLAASSTKSLPSSELLDSSSDKGQQVFKGQHEVAGTNSFEDPNSHFNVSNSSNHEEASPKKEVLKSPQFQRRSLDILRLGELSSDDMMLDKATMDEFSSSLVIKSIFTGRLTSVVMCQSCNEITNTPEPIQDLSIPIHYPSSRVSRRHRFHRALRSRFSRSPKKSSVKIVVDNANDDTDQAPTTNSSSLNENLLGGHASENDKSLKQSPFQKLTRRLSDLSVNSSGQISKQDFDNSNSIFSESSLSSPIIEEPKTLIDCLKNFTHVEELSGENMFACENCCNQPNEVGSPAKGGLTSDNDKYSFNNSVYRNAYKRMLLDDPLPPVFIIHLKRFFQEISHDGYANPKKISDFIEFEQELDLNEFVMPHLRASSSFRYRLFGVIVHSGTLNYGHYVAYVLSHKFLDLSAPSTNSKDFRSEAGIPERRWLYISDNIVRESSWDEVSKVEAYMLFYERV</sequence>
<proteinExistence type="evidence at protein level"/>